<keyword id="KW-0002">3D-structure</keyword>
<keyword id="KW-1185">Reference proteome</keyword>
<keyword id="KW-0687">Ribonucleoprotein</keyword>
<keyword id="KW-0689">Ribosomal protein</keyword>
<keyword id="KW-0694">RNA-binding</keyword>
<keyword id="KW-0699">rRNA-binding</keyword>
<keyword id="KW-0820">tRNA-binding</keyword>
<evidence type="ECO:0000255" key="1">
    <source>
        <dbReference type="HAMAP-Rule" id="MF_01342"/>
    </source>
</evidence>
<evidence type="ECO:0000305" key="2"/>
<evidence type="ECO:0007829" key="3">
    <source>
        <dbReference type="PDB" id="6WU9"/>
    </source>
</evidence>
<protein>
    <recommendedName>
        <fullName evidence="1">Large ribosomal subunit protein uL16</fullName>
    </recommendedName>
    <alternativeName>
        <fullName evidence="2">50S ribosomal protein L16</fullName>
    </alternativeName>
</protein>
<sequence length="144" mass="16225">MLVPKRVKHRREFRGKMRGEAKGGKEVAFGEWGLQATESHWITNRQIEAARIAMTRYMKRGGKVWIKIFPHKSYTSKAIGVRMGKGKGAPEGWVSPVKRGKIMFEIAGVPEEVAREALRLASHKLPVKTKIVKREEMGGESNEG</sequence>
<dbReference type="EMBL" id="AE016830">
    <property type="protein sequence ID" value="AAO80082.1"/>
    <property type="molecule type" value="Genomic_DNA"/>
</dbReference>
<dbReference type="RefSeq" id="NP_814011.1">
    <property type="nucleotide sequence ID" value="NC_004668.1"/>
</dbReference>
<dbReference type="RefSeq" id="WP_002356208.1">
    <property type="nucleotide sequence ID" value="NZ_KE136524.1"/>
</dbReference>
<dbReference type="PDB" id="6WU9">
    <property type="method" value="EM"/>
    <property type="resolution" value="2.90 A"/>
    <property type="chains" value="N=1-141"/>
</dbReference>
<dbReference type="PDB" id="7P7Q">
    <property type="method" value="EM"/>
    <property type="resolution" value="2.40 A"/>
    <property type="chains" value="P=1-144"/>
</dbReference>
<dbReference type="PDB" id="7P7R">
    <property type="method" value="EM"/>
    <property type="resolution" value="2.90 A"/>
    <property type="chains" value="P=1-144"/>
</dbReference>
<dbReference type="PDBsum" id="6WU9"/>
<dbReference type="PDBsum" id="7P7Q"/>
<dbReference type="PDBsum" id="7P7R"/>
<dbReference type="EMDB" id="EMD-13241"/>
<dbReference type="EMDB" id="EMD-13242"/>
<dbReference type="SMR" id="Q839F7"/>
<dbReference type="STRING" id="226185.EF_0213"/>
<dbReference type="EnsemblBacteria" id="AAO80082">
    <property type="protein sequence ID" value="AAO80082"/>
    <property type="gene ID" value="EF_0213"/>
</dbReference>
<dbReference type="GeneID" id="60892708"/>
<dbReference type="KEGG" id="efa:EF0213"/>
<dbReference type="PATRIC" id="fig|226185.45.peg.53"/>
<dbReference type="eggNOG" id="COG0197">
    <property type="taxonomic scope" value="Bacteria"/>
</dbReference>
<dbReference type="HOGENOM" id="CLU_078858_2_1_9"/>
<dbReference type="Proteomes" id="UP000001415">
    <property type="component" value="Chromosome"/>
</dbReference>
<dbReference type="GO" id="GO:0022625">
    <property type="term" value="C:cytosolic large ribosomal subunit"/>
    <property type="evidence" value="ECO:0007669"/>
    <property type="project" value="TreeGrafter"/>
</dbReference>
<dbReference type="GO" id="GO:0019843">
    <property type="term" value="F:rRNA binding"/>
    <property type="evidence" value="ECO:0007669"/>
    <property type="project" value="UniProtKB-UniRule"/>
</dbReference>
<dbReference type="GO" id="GO:0003735">
    <property type="term" value="F:structural constituent of ribosome"/>
    <property type="evidence" value="ECO:0007669"/>
    <property type="project" value="InterPro"/>
</dbReference>
<dbReference type="GO" id="GO:0000049">
    <property type="term" value="F:tRNA binding"/>
    <property type="evidence" value="ECO:0007669"/>
    <property type="project" value="UniProtKB-KW"/>
</dbReference>
<dbReference type="GO" id="GO:0006412">
    <property type="term" value="P:translation"/>
    <property type="evidence" value="ECO:0007669"/>
    <property type="project" value="UniProtKB-UniRule"/>
</dbReference>
<dbReference type="CDD" id="cd01433">
    <property type="entry name" value="Ribosomal_L16_L10e"/>
    <property type="match status" value="1"/>
</dbReference>
<dbReference type="FunFam" id="3.90.1170.10:FF:000001">
    <property type="entry name" value="50S ribosomal protein L16"/>
    <property type="match status" value="1"/>
</dbReference>
<dbReference type="Gene3D" id="3.90.1170.10">
    <property type="entry name" value="Ribosomal protein L10e/L16"/>
    <property type="match status" value="1"/>
</dbReference>
<dbReference type="HAMAP" id="MF_01342">
    <property type="entry name" value="Ribosomal_uL16"/>
    <property type="match status" value="1"/>
</dbReference>
<dbReference type="InterPro" id="IPR047873">
    <property type="entry name" value="Ribosomal_uL16"/>
</dbReference>
<dbReference type="InterPro" id="IPR000114">
    <property type="entry name" value="Ribosomal_uL16_bact-type"/>
</dbReference>
<dbReference type="InterPro" id="IPR020798">
    <property type="entry name" value="Ribosomal_uL16_CS"/>
</dbReference>
<dbReference type="InterPro" id="IPR016180">
    <property type="entry name" value="Ribosomal_uL16_dom"/>
</dbReference>
<dbReference type="InterPro" id="IPR036920">
    <property type="entry name" value="Ribosomal_uL16_sf"/>
</dbReference>
<dbReference type="NCBIfam" id="TIGR01164">
    <property type="entry name" value="rplP_bact"/>
    <property type="match status" value="1"/>
</dbReference>
<dbReference type="PANTHER" id="PTHR12220">
    <property type="entry name" value="50S/60S RIBOSOMAL PROTEIN L16"/>
    <property type="match status" value="1"/>
</dbReference>
<dbReference type="PANTHER" id="PTHR12220:SF13">
    <property type="entry name" value="LARGE RIBOSOMAL SUBUNIT PROTEIN UL16M"/>
    <property type="match status" value="1"/>
</dbReference>
<dbReference type="Pfam" id="PF00252">
    <property type="entry name" value="Ribosomal_L16"/>
    <property type="match status" value="1"/>
</dbReference>
<dbReference type="PRINTS" id="PR00060">
    <property type="entry name" value="RIBOSOMALL16"/>
</dbReference>
<dbReference type="SUPFAM" id="SSF54686">
    <property type="entry name" value="Ribosomal protein L16p/L10e"/>
    <property type="match status" value="1"/>
</dbReference>
<dbReference type="PROSITE" id="PS00586">
    <property type="entry name" value="RIBOSOMAL_L16_1"/>
    <property type="match status" value="1"/>
</dbReference>
<dbReference type="PROSITE" id="PS00701">
    <property type="entry name" value="RIBOSOMAL_L16_2"/>
    <property type="match status" value="1"/>
</dbReference>
<gene>
    <name evidence="1" type="primary">rplP</name>
    <name type="ordered locus">EF_0213</name>
</gene>
<organism>
    <name type="scientific">Enterococcus faecalis (strain ATCC 700802 / V583)</name>
    <dbReference type="NCBI Taxonomy" id="226185"/>
    <lineage>
        <taxon>Bacteria</taxon>
        <taxon>Bacillati</taxon>
        <taxon>Bacillota</taxon>
        <taxon>Bacilli</taxon>
        <taxon>Lactobacillales</taxon>
        <taxon>Enterococcaceae</taxon>
        <taxon>Enterococcus</taxon>
    </lineage>
</organism>
<feature type="chain" id="PRO_0000062099" description="Large ribosomal subunit protein uL16">
    <location>
        <begin position="1"/>
        <end position="144"/>
    </location>
</feature>
<feature type="strand" evidence="3">
    <location>
        <begin position="29"/>
        <end position="36"/>
    </location>
</feature>
<feature type="strand" evidence="3">
    <location>
        <begin position="40"/>
        <end position="43"/>
    </location>
</feature>
<feature type="helix" evidence="3">
    <location>
        <begin position="44"/>
        <end position="56"/>
    </location>
</feature>
<feature type="strand" evidence="3">
    <location>
        <begin position="63"/>
        <end position="66"/>
    </location>
</feature>
<feature type="strand" evidence="3">
    <location>
        <begin position="93"/>
        <end position="97"/>
    </location>
</feature>
<feature type="strand" evidence="3">
    <location>
        <begin position="102"/>
        <end position="109"/>
    </location>
</feature>
<feature type="helix" evidence="3">
    <location>
        <begin position="111"/>
        <end position="122"/>
    </location>
</feature>
<feature type="strand" evidence="3">
    <location>
        <begin position="125"/>
        <end position="127"/>
    </location>
</feature>
<feature type="strand" evidence="3">
    <location>
        <begin position="129"/>
        <end position="133"/>
    </location>
</feature>
<name>RL16_ENTFA</name>
<accession>Q839F7</accession>
<proteinExistence type="evidence at protein level"/>
<reference key="1">
    <citation type="journal article" date="2003" name="Science">
        <title>Role of mobile DNA in the evolution of vancomycin-resistant Enterococcus faecalis.</title>
        <authorList>
            <person name="Paulsen I.T."/>
            <person name="Banerjei L."/>
            <person name="Myers G.S.A."/>
            <person name="Nelson K.E."/>
            <person name="Seshadri R."/>
            <person name="Read T.D."/>
            <person name="Fouts D.E."/>
            <person name="Eisen J.A."/>
            <person name="Gill S.R."/>
            <person name="Heidelberg J.F."/>
            <person name="Tettelin H."/>
            <person name="Dodson R.J."/>
            <person name="Umayam L.A."/>
            <person name="Brinkac L.M."/>
            <person name="Beanan M.J."/>
            <person name="Daugherty S.C."/>
            <person name="DeBoy R.T."/>
            <person name="Durkin S.A."/>
            <person name="Kolonay J.F."/>
            <person name="Madupu R."/>
            <person name="Nelson W.C."/>
            <person name="Vamathevan J.J."/>
            <person name="Tran B."/>
            <person name="Upton J."/>
            <person name="Hansen T."/>
            <person name="Shetty J."/>
            <person name="Khouri H.M."/>
            <person name="Utterback T.R."/>
            <person name="Radune D."/>
            <person name="Ketchum K.A."/>
            <person name="Dougherty B.A."/>
            <person name="Fraser C.M."/>
        </authorList>
    </citation>
    <scope>NUCLEOTIDE SEQUENCE [LARGE SCALE GENOMIC DNA]</scope>
    <source>
        <strain>ATCC 700802 / V583</strain>
    </source>
</reference>
<comment type="function">
    <text evidence="1">Binds 23S rRNA and is also seen to make contacts with the A and possibly P site tRNAs.</text>
</comment>
<comment type="subunit">
    <text evidence="1">Part of the 50S ribosomal subunit.</text>
</comment>
<comment type="similarity">
    <text evidence="1">Belongs to the universal ribosomal protein uL16 family.</text>
</comment>